<proteinExistence type="inferred from homology"/>
<accession>Q4UMR6</accession>
<name>RS14_RICFE</name>
<reference key="1">
    <citation type="journal article" date="2005" name="PLoS Biol.">
        <title>The genome sequence of Rickettsia felis identifies the first putative conjugative plasmid in an obligate intracellular parasite.</title>
        <authorList>
            <person name="Ogata H."/>
            <person name="Renesto P."/>
            <person name="Audic S."/>
            <person name="Robert C."/>
            <person name="Blanc G."/>
            <person name="Fournier P.-E."/>
            <person name="Parinello H."/>
            <person name="Claverie J.-M."/>
            <person name="Raoult D."/>
        </authorList>
    </citation>
    <scope>NUCLEOTIDE SEQUENCE [LARGE SCALE GENOMIC DNA]</scope>
    <source>
        <strain>ATCC VR-1525 / URRWXCal2</strain>
    </source>
</reference>
<gene>
    <name evidence="1" type="primary">rpsN</name>
    <name type="ordered locus">RF_0291</name>
</gene>
<dbReference type="EMBL" id="CP000053">
    <property type="protein sequence ID" value="AAY61142.1"/>
    <property type="molecule type" value="Genomic_DNA"/>
</dbReference>
<dbReference type="SMR" id="Q4UMR6"/>
<dbReference type="STRING" id="315456.RF_0291"/>
<dbReference type="KEGG" id="rfe:RF_0291"/>
<dbReference type="eggNOG" id="COG0199">
    <property type="taxonomic scope" value="Bacteria"/>
</dbReference>
<dbReference type="HOGENOM" id="CLU_139869_0_1_5"/>
<dbReference type="OrthoDB" id="9810484at2"/>
<dbReference type="Proteomes" id="UP000008548">
    <property type="component" value="Chromosome"/>
</dbReference>
<dbReference type="GO" id="GO:0005737">
    <property type="term" value="C:cytoplasm"/>
    <property type="evidence" value="ECO:0007669"/>
    <property type="project" value="UniProtKB-ARBA"/>
</dbReference>
<dbReference type="GO" id="GO:0015935">
    <property type="term" value="C:small ribosomal subunit"/>
    <property type="evidence" value="ECO:0007669"/>
    <property type="project" value="TreeGrafter"/>
</dbReference>
<dbReference type="GO" id="GO:0019843">
    <property type="term" value="F:rRNA binding"/>
    <property type="evidence" value="ECO:0007669"/>
    <property type="project" value="UniProtKB-UniRule"/>
</dbReference>
<dbReference type="GO" id="GO:0003735">
    <property type="term" value="F:structural constituent of ribosome"/>
    <property type="evidence" value="ECO:0007669"/>
    <property type="project" value="InterPro"/>
</dbReference>
<dbReference type="GO" id="GO:0006412">
    <property type="term" value="P:translation"/>
    <property type="evidence" value="ECO:0007669"/>
    <property type="project" value="UniProtKB-UniRule"/>
</dbReference>
<dbReference type="FunFam" id="1.10.287.1480:FF:000001">
    <property type="entry name" value="30S ribosomal protein S14"/>
    <property type="match status" value="1"/>
</dbReference>
<dbReference type="Gene3D" id="1.10.287.1480">
    <property type="match status" value="1"/>
</dbReference>
<dbReference type="HAMAP" id="MF_00537">
    <property type="entry name" value="Ribosomal_uS14_1"/>
    <property type="match status" value="1"/>
</dbReference>
<dbReference type="InterPro" id="IPR001209">
    <property type="entry name" value="Ribosomal_uS14"/>
</dbReference>
<dbReference type="InterPro" id="IPR023036">
    <property type="entry name" value="Ribosomal_uS14_bac/plastid"/>
</dbReference>
<dbReference type="InterPro" id="IPR018271">
    <property type="entry name" value="Ribosomal_uS14_CS"/>
</dbReference>
<dbReference type="NCBIfam" id="NF006477">
    <property type="entry name" value="PRK08881.1"/>
    <property type="match status" value="1"/>
</dbReference>
<dbReference type="PANTHER" id="PTHR19836">
    <property type="entry name" value="30S RIBOSOMAL PROTEIN S14"/>
    <property type="match status" value="1"/>
</dbReference>
<dbReference type="PANTHER" id="PTHR19836:SF19">
    <property type="entry name" value="SMALL RIBOSOMAL SUBUNIT PROTEIN US14M"/>
    <property type="match status" value="1"/>
</dbReference>
<dbReference type="Pfam" id="PF00253">
    <property type="entry name" value="Ribosomal_S14"/>
    <property type="match status" value="1"/>
</dbReference>
<dbReference type="SUPFAM" id="SSF57716">
    <property type="entry name" value="Glucocorticoid receptor-like (DNA-binding domain)"/>
    <property type="match status" value="1"/>
</dbReference>
<dbReference type="PROSITE" id="PS00527">
    <property type="entry name" value="RIBOSOMAL_S14"/>
    <property type="match status" value="1"/>
</dbReference>
<organism>
    <name type="scientific">Rickettsia felis (strain ATCC VR-1525 / URRWXCal2)</name>
    <name type="common">Rickettsia azadi</name>
    <dbReference type="NCBI Taxonomy" id="315456"/>
    <lineage>
        <taxon>Bacteria</taxon>
        <taxon>Pseudomonadati</taxon>
        <taxon>Pseudomonadota</taxon>
        <taxon>Alphaproteobacteria</taxon>
        <taxon>Rickettsiales</taxon>
        <taxon>Rickettsiaceae</taxon>
        <taxon>Rickettsieae</taxon>
        <taxon>Rickettsia</taxon>
        <taxon>spotted fever group</taxon>
    </lineage>
</organism>
<feature type="chain" id="PRO_0000277949" description="Small ribosomal subunit protein uS14">
    <location>
        <begin position="1"/>
        <end position="101"/>
    </location>
</feature>
<feature type="region of interest" description="Disordered" evidence="2">
    <location>
        <begin position="1"/>
        <end position="26"/>
    </location>
</feature>
<feature type="compositionally biased region" description="Basic residues" evidence="2">
    <location>
        <begin position="11"/>
        <end position="26"/>
    </location>
</feature>
<evidence type="ECO:0000255" key="1">
    <source>
        <dbReference type="HAMAP-Rule" id="MF_00537"/>
    </source>
</evidence>
<evidence type="ECO:0000256" key="2">
    <source>
        <dbReference type="SAM" id="MobiDB-lite"/>
    </source>
</evidence>
<evidence type="ECO:0000305" key="3"/>
<sequence>MAKVSSIKKNESRKKKSQSLHNKRSALKSKIYDKNISLEERFSLVMSLAQLPRNSSSTRIRNRCELTGRPRGVTRKFGISRNKLRELIGRGLVPGVVKSSW</sequence>
<protein>
    <recommendedName>
        <fullName evidence="1">Small ribosomal subunit protein uS14</fullName>
    </recommendedName>
    <alternativeName>
        <fullName evidence="3">30S ribosomal protein S14</fullName>
    </alternativeName>
</protein>
<comment type="function">
    <text evidence="1">Binds 16S rRNA, required for the assembly of 30S particles and may also be responsible for determining the conformation of the 16S rRNA at the A site.</text>
</comment>
<comment type="subunit">
    <text evidence="1">Part of the 30S ribosomal subunit. Contacts proteins S3 and S10.</text>
</comment>
<comment type="similarity">
    <text evidence="1">Belongs to the universal ribosomal protein uS14 family.</text>
</comment>
<keyword id="KW-0687">Ribonucleoprotein</keyword>
<keyword id="KW-0689">Ribosomal protein</keyword>
<keyword id="KW-0694">RNA-binding</keyword>
<keyword id="KW-0699">rRNA-binding</keyword>